<gene>
    <name evidence="1" type="primary">rimP</name>
    <name type="ordered locus">A9601_16951</name>
</gene>
<protein>
    <recommendedName>
        <fullName evidence="1">Ribosome maturation factor RimP</fullName>
    </recommendedName>
</protein>
<reference key="1">
    <citation type="journal article" date="2007" name="PLoS Genet.">
        <title>Patterns and implications of gene gain and loss in the evolution of Prochlorococcus.</title>
        <authorList>
            <person name="Kettler G.C."/>
            <person name="Martiny A.C."/>
            <person name="Huang K."/>
            <person name="Zucker J."/>
            <person name="Coleman M.L."/>
            <person name="Rodrigue S."/>
            <person name="Chen F."/>
            <person name="Lapidus A."/>
            <person name="Ferriera S."/>
            <person name="Johnson J."/>
            <person name="Steglich C."/>
            <person name="Church G.M."/>
            <person name="Richardson P."/>
            <person name="Chisholm S.W."/>
        </authorList>
    </citation>
    <scope>NUCLEOTIDE SEQUENCE [LARGE SCALE GENOMIC DNA]</scope>
    <source>
        <strain>AS9601</strain>
    </source>
</reference>
<accession>A2BT67</accession>
<keyword id="KW-0963">Cytoplasm</keyword>
<keyword id="KW-0690">Ribosome biogenesis</keyword>
<dbReference type="EMBL" id="CP000551">
    <property type="protein sequence ID" value="ABM70978.1"/>
    <property type="molecule type" value="Genomic_DNA"/>
</dbReference>
<dbReference type="RefSeq" id="WP_011819106.1">
    <property type="nucleotide sequence ID" value="NC_008816.1"/>
</dbReference>
<dbReference type="SMR" id="A2BT67"/>
<dbReference type="STRING" id="146891.A9601_16951"/>
<dbReference type="KEGG" id="pmb:A9601_16951"/>
<dbReference type="eggNOG" id="COG0779">
    <property type="taxonomic scope" value="Bacteria"/>
</dbReference>
<dbReference type="HOGENOM" id="CLU_070525_2_1_3"/>
<dbReference type="OrthoDB" id="9805006at2"/>
<dbReference type="Proteomes" id="UP000002590">
    <property type="component" value="Chromosome"/>
</dbReference>
<dbReference type="GO" id="GO:0005829">
    <property type="term" value="C:cytosol"/>
    <property type="evidence" value="ECO:0007669"/>
    <property type="project" value="TreeGrafter"/>
</dbReference>
<dbReference type="GO" id="GO:0000028">
    <property type="term" value="P:ribosomal small subunit assembly"/>
    <property type="evidence" value="ECO:0007669"/>
    <property type="project" value="TreeGrafter"/>
</dbReference>
<dbReference type="GO" id="GO:0006412">
    <property type="term" value="P:translation"/>
    <property type="evidence" value="ECO:0007669"/>
    <property type="project" value="TreeGrafter"/>
</dbReference>
<dbReference type="Gene3D" id="3.30.300.70">
    <property type="entry name" value="RimP-like superfamily, N-terminal"/>
    <property type="match status" value="1"/>
</dbReference>
<dbReference type="HAMAP" id="MF_01077">
    <property type="entry name" value="RimP"/>
    <property type="match status" value="1"/>
</dbReference>
<dbReference type="InterPro" id="IPR003728">
    <property type="entry name" value="Ribosome_maturation_RimP"/>
</dbReference>
<dbReference type="InterPro" id="IPR036847">
    <property type="entry name" value="RimP_C_sf"/>
</dbReference>
<dbReference type="InterPro" id="IPR028989">
    <property type="entry name" value="RimP_N"/>
</dbReference>
<dbReference type="InterPro" id="IPR035956">
    <property type="entry name" value="RimP_N_sf"/>
</dbReference>
<dbReference type="NCBIfam" id="NF011240">
    <property type="entry name" value="PRK14646.1"/>
    <property type="match status" value="1"/>
</dbReference>
<dbReference type="PANTHER" id="PTHR33867">
    <property type="entry name" value="RIBOSOME MATURATION FACTOR RIMP"/>
    <property type="match status" value="1"/>
</dbReference>
<dbReference type="PANTHER" id="PTHR33867:SF1">
    <property type="entry name" value="RIBOSOME MATURATION FACTOR RIMP"/>
    <property type="match status" value="1"/>
</dbReference>
<dbReference type="Pfam" id="PF02576">
    <property type="entry name" value="RimP_N"/>
    <property type="match status" value="1"/>
</dbReference>
<dbReference type="SUPFAM" id="SSF74942">
    <property type="entry name" value="YhbC-like, C-terminal domain"/>
    <property type="match status" value="1"/>
</dbReference>
<dbReference type="SUPFAM" id="SSF75420">
    <property type="entry name" value="YhbC-like, N-terminal domain"/>
    <property type="match status" value="1"/>
</dbReference>
<name>RIMP_PROMS</name>
<feature type="chain" id="PRO_1000064746" description="Ribosome maturation factor RimP">
    <location>
        <begin position="1"/>
        <end position="155"/>
    </location>
</feature>
<organism>
    <name type="scientific">Prochlorococcus marinus (strain AS9601)</name>
    <dbReference type="NCBI Taxonomy" id="146891"/>
    <lineage>
        <taxon>Bacteria</taxon>
        <taxon>Bacillati</taxon>
        <taxon>Cyanobacteriota</taxon>
        <taxon>Cyanophyceae</taxon>
        <taxon>Synechococcales</taxon>
        <taxon>Prochlorococcaceae</taxon>
        <taxon>Prochlorococcus</taxon>
    </lineage>
</organism>
<comment type="function">
    <text evidence="1">Required for maturation of 30S ribosomal subunits.</text>
</comment>
<comment type="subcellular location">
    <subcellularLocation>
        <location evidence="1">Cytoplasm</location>
    </subcellularLocation>
</comment>
<comment type="similarity">
    <text evidence="1">Belongs to the RimP family.</text>
</comment>
<proteinExistence type="inferred from homology"/>
<evidence type="ECO:0000255" key="1">
    <source>
        <dbReference type="HAMAP-Rule" id="MF_01077"/>
    </source>
</evidence>
<sequence>MNKENKSKLEALLEKVANERDLEICGLNIQTNQNPVVIEITIRKTNGDDISLDDCALFNTPASDEIEKSNLLNCSYVLEISSQGVSDELTSERDFKTFKGFPVNVELNQKNSKIKILNGLLYEKSKDYLAINIKGKIKKIPFDEVLKISLCTLKD</sequence>